<accession>B5EXD9</accession>
<dbReference type="EC" id="2.7.7.3" evidence="1"/>
<dbReference type="EMBL" id="CP001138">
    <property type="protein sequence ID" value="ACH48464.1"/>
    <property type="molecule type" value="Genomic_DNA"/>
</dbReference>
<dbReference type="RefSeq" id="WP_001171887.1">
    <property type="nucleotide sequence ID" value="NC_011149.1"/>
</dbReference>
<dbReference type="SMR" id="B5EXD9"/>
<dbReference type="KEGG" id="sea:SeAg_B3942"/>
<dbReference type="HOGENOM" id="CLU_100149_0_1_6"/>
<dbReference type="UniPathway" id="UPA00241">
    <property type="reaction ID" value="UER00355"/>
</dbReference>
<dbReference type="Proteomes" id="UP000008819">
    <property type="component" value="Chromosome"/>
</dbReference>
<dbReference type="GO" id="GO:0005737">
    <property type="term" value="C:cytoplasm"/>
    <property type="evidence" value="ECO:0007669"/>
    <property type="project" value="UniProtKB-SubCell"/>
</dbReference>
<dbReference type="GO" id="GO:0005524">
    <property type="term" value="F:ATP binding"/>
    <property type="evidence" value="ECO:0007669"/>
    <property type="project" value="UniProtKB-KW"/>
</dbReference>
<dbReference type="GO" id="GO:0004595">
    <property type="term" value="F:pantetheine-phosphate adenylyltransferase activity"/>
    <property type="evidence" value="ECO:0007669"/>
    <property type="project" value="UniProtKB-UniRule"/>
</dbReference>
<dbReference type="GO" id="GO:0015937">
    <property type="term" value="P:coenzyme A biosynthetic process"/>
    <property type="evidence" value="ECO:0007669"/>
    <property type="project" value="UniProtKB-UniRule"/>
</dbReference>
<dbReference type="CDD" id="cd02163">
    <property type="entry name" value="PPAT"/>
    <property type="match status" value="1"/>
</dbReference>
<dbReference type="FunFam" id="3.40.50.620:FF:000012">
    <property type="entry name" value="Phosphopantetheine adenylyltransferase"/>
    <property type="match status" value="1"/>
</dbReference>
<dbReference type="Gene3D" id="3.40.50.620">
    <property type="entry name" value="HUPs"/>
    <property type="match status" value="1"/>
</dbReference>
<dbReference type="HAMAP" id="MF_00151">
    <property type="entry name" value="PPAT_bact"/>
    <property type="match status" value="1"/>
</dbReference>
<dbReference type="InterPro" id="IPR004821">
    <property type="entry name" value="Cyt_trans-like"/>
</dbReference>
<dbReference type="InterPro" id="IPR001980">
    <property type="entry name" value="PPAT"/>
</dbReference>
<dbReference type="InterPro" id="IPR014729">
    <property type="entry name" value="Rossmann-like_a/b/a_fold"/>
</dbReference>
<dbReference type="NCBIfam" id="TIGR01510">
    <property type="entry name" value="coaD_prev_kdtB"/>
    <property type="match status" value="1"/>
</dbReference>
<dbReference type="NCBIfam" id="TIGR00125">
    <property type="entry name" value="cyt_tran_rel"/>
    <property type="match status" value="1"/>
</dbReference>
<dbReference type="PANTHER" id="PTHR21342">
    <property type="entry name" value="PHOSPHOPANTETHEINE ADENYLYLTRANSFERASE"/>
    <property type="match status" value="1"/>
</dbReference>
<dbReference type="PANTHER" id="PTHR21342:SF1">
    <property type="entry name" value="PHOSPHOPANTETHEINE ADENYLYLTRANSFERASE"/>
    <property type="match status" value="1"/>
</dbReference>
<dbReference type="Pfam" id="PF01467">
    <property type="entry name" value="CTP_transf_like"/>
    <property type="match status" value="1"/>
</dbReference>
<dbReference type="PRINTS" id="PR01020">
    <property type="entry name" value="LPSBIOSNTHSS"/>
</dbReference>
<dbReference type="SUPFAM" id="SSF52374">
    <property type="entry name" value="Nucleotidylyl transferase"/>
    <property type="match status" value="1"/>
</dbReference>
<reference key="1">
    <citation type="journal article" date="2011" name="J. Bacteriol.">
        <title>Comparative genomics of 28 Salmonella enterica isolates: evidence for CRISPR-mediated adaptive sublineage evolution.</title>
        <authorList>
            <person name="Fricke W.F."/>
            <person name="Mammel M.K."/>
            <person name="McDermott P.F."/>
            <person name="Tartera C."/>
            <person name="White D.G."/>
            <person name="Leclerc J.E."/>
            <person name="Ravel J."/>
            <person name="Cebula T.A."/>
        </authorList>
    </citation>
    <scope>NUCLEOTIDE SEQUENCE [LARGE SCALE GENOMIC DNA]</scope>
    <source>
        <strain>SL483</strain>
    </source>
</reference>
<name>COAD_SALA4</name>
<organism>
    <name type="scientific">Salmonella agona (strain SL483)</name>
    <dbReference type="NCBI Taxonomy" id="454166"/>
    <lineage>
        <taxon>Bacteria</taxon>
        <taxon>Pseudomonadati</taxon>
        <taxon>Pseudomonadota</taxon>
        <taxon>Gammaproteobacteria</taxon>
        <taxon>Enterobacterales</taxon>
        <taxon>Enterobacteriaceae</taxon>
        <taxon>Salmonella</taxon>
    </lineage>
</organism>
<gene>
    <name evidence="1" type="primary">coaD</name>
    <name type="ordered locus">SeAg_B3942</name>
</gene>
<protein>
    <recommendedName>
        <fullName evidence="1">Phosphopantetheine adenylyltransferase</fullName>
        <ecNumber evidence="1">2.7.7.3</ecNumber>
    </recommendedName>
    <alternativeName>
        <fullName evidence="1">Dephospho-CoA pyrophosphorylase</fullName>
    </alternativeName>
    <alternativeName>
        <fullName evidence="1">Pantetheine-phosphate adenylyltransferase</fullName>
        <shortName evidence="1">PPAT</shortName>
    </alternativeName>
</protein>
<proteinExistence type="inferred from homology"/>
<keyword id="KW-0067">ATP-binding</keyword>
<keyword id="KW-0173">Coenzyme A biosynthesis</keyword>
<keyword id="KW-0963">Cytoplasm</keyword>
<keyword id="KW-0460">Magnesium</keyword>
<keyword id="KW-0547">Nucleotide-binding</keyword>
<keyword id="KW-0548">Nucleotidyltransferase</keyword>
<keyword id="KW-0808">Transferase</keyword>
<feature type="chain" id="PRO_1000096832" description="Phosphopantetheine adenylyltransferase">
    <location>
        <begin position="1"/>
        <end position="159"/>
    </location>
</feature>
<feature type="binding site" evidence="1">
    <location>
        <begin position="10"/>
        <end position="11"/>
    </location>
    <ligand>
        <name>ATP</name>
        <dbReference type="ChEBI" id="CHEBI:30616"/>
    </ligand>
</feature>
<feature type="binding site" evidence="1">
    <location>
        <position position="10"/>
    </location>
    <ligand>
        <name>substrate</name>
    </ligand>
</feature>
<feature type="binding site" evidence="1">
    <location>
        <position position="18"/>
    </location>
    <ligand>
        <name>ATP</name>
        <dbReference type="ChEBI" id="CHEBI:30616"/>
    </ligand>
</feature>
<feature type="binding site" evidence="1">
    <location>
        <position position="42"/>
    </location>
    <ligand>
        <name>substrate</name>
    </ligand>
</feature>
<feature type="binding site" evidence="1">
    <location>
        <position position="74"/>
    </location>
    <ligand>
        <name>substrate</name>
    </ligand>
</feature>
<feature type="binding site" evidence="1">
    <location>
        <position position="88"/>
    </location>
    <ligand>
        <name>substrate</name>
    </ligand>
</feature>
<feature type="binding site" evidence="1">
    <location>
        <begin position="89"/>
        <end position="91"/>
    </location>
    <ligand>
        <name>ATP</name>
        <dbReference type="ChEBI" id="CHEBI:30616"/>
    </ligand>
</feature>
<feature type="binding site" evidence="1">
    <location>
        <position position="99"/>
    </location>
    <ligand>
        <name>ATP</name>
        <dbReference type="ChEBI" id="CHEBI:30616"/>
    </ligand>
</feature>
<feature type="binding site" evidence="1">
    <location>
        <begin position="124"/>
        <end position="130"/>
    </location>
    <ligand>
        <name>ATP</name>
        <dbReference type="ChEBI" id="CHEBI:30616"/>
    </ligand>
</feature>
<feature type="site" description="Transition state stabilizer" evidence="1">
    <location>
        <position position="18"/>
    </location>
</feature>
<comment type="function">
    <text evidence="1">Reversibly transfers an adenylyl group from ATP to 4'-phosphopantetheine, yielding dephospho-CoA (dPCoA) and pyrophosphate.</text>
</comment>
<comment type="catalytic activity">
    <reaction evidence="1">
        <text>(R)-4'-phosphopantetheine + ATP + H(+) = 3'-dephospho-CoA + diphosphate</text>
        <dbReference type="Rhea" id="RHEA:19801"/>
        <dbReference type="ChEBI" id="CHEBI:15378"/>
        <dbReference type="ChEBI" id="CHEBI:30616"/>
        <dbReference type="ChEBI" id="CHEBI:33019"/>
        <dbReference type="ChEBI" id="CHEBI:57328"/>
        <dbReference type="ChEBI" id="CHEBI:61723"/>
        <dbReference type="EC" id="2.7.7.3"/>
    </reaction>
</comment>
<comment type="cofactor">
    <cofactor evidence="1">
        <name>Mg(2+)</name>
        <dbReference type="ChEBI" id="CHEBI:18420"/>
    </cofactor>
</comment>
<comment type="pathway">
    <text evidence="1">Cofactor biosynthesis; coenzyme A biosynthesis; CoA from (R)-pantothenate: step 4/5.</text>
</comment>
<comment type="subunit">
    <text evidence="1">Homohexamer.</text>
</comment>
<comment type="subcellular location">
    <subcellularLocation>
        <location evidence="1">Cytoplasm</location>
    </subcellularLocation>
</comment>
<comment type="similarity">
    <text evidence="1">Belongs to the bacterial CoaD family.</text>
</comment>
<evidence type="ECO:0000255" key="1">
    <source>
        <dbReference type="HAMAP-Rule" id="MF_00151"/>
    </source>
</evidence>
<sequence length="159" mass="17940">MQKRAIYPGTFDPITNGHLDIVTRATQMFDHVILAIAASPGKKPMFTLEERVALAQKATAHLGNVEVVGFSDLMANFARDRQANILIRGLRAVADFEYEMQLAHMNRHLMPQLESVFLMPSKEWSFISSSLVKEVARHQGDVTHFLPDNVHQALMDKLK</sequence>